<gene>
    <name type="ordered locus">YDR042C</name>
    <name type="ORF">YD6888.04c</name>
</gene>
<reference key="1">
    <citation type="journal article" date="1997" name="Nature">
        <title>The nucleotide sequence of Saccharomyces cerevisiae chromosome IV.</title>
        <authorList>
            <person name="Jacq C."/>
            <person name="Alt-Moerbe J."/>
            <person name="Andre B."/>
            <person name="Arnold W."/>
            <person name="Bahr A."/>
            <person name="Ballesta J.P.G."/>
            <person name="Bargues M."/>
            <person name="Baron L."/>
            <person name="Becker A."/>
            <person name="Biteau N."/>
            <person name="Bloecker H."/>
            <person name="Blugeon C."/>
            <person name="Boskovic J."/>
            <person name="Brandt P."/>
            <person name="Brueckner M."/>
            <person name="Buitrago M.J."/>
            <person name="Coster F."/>
            <person name="Delaveau T."/>
            <person name="del Rey F."/>
            <person name="Dujon B."/>
            <person name="Eide L.G."/>
            <person name="Garcia-Cantalejo J.M."/>
            <person name="Goffeau A."/>
            <person name="Gomez-Peris A."/>
            <person name="Granotier C."/>
            <person name="Hanemann V."/>
            <person name="Hankeln T."/>
            <person name="Hoheisel J.D."/>
            <person name="Jaeger W."/>
            <person name="Jimenez A."/>
            <person name="Jonniaux J.-L."/>
            <person name="Kraemer C."/>
            <person name="Kuester H."/>
            <person name="Laamanen P."/>
            <person name="Legros Y."/>
            <person name="Louis E.J."/>
            <person name="Moeller-Rieker S."/>
            <person name="Monnet A."/>
            <person name="Moro M."/>
            <person name="Mueller-Auer S."/>
            <person name="Nussbaumer B."/>
            <person name="Paricio N."/>
            <person name="Paulin L."/>
            <person name="Perea J."/>
            <person name="Perez-Alonso M."/>
            <person name="Perez-Ortin J.E."/>
            <person name="Pohl T.M."/>
            <person name="Prydz H."/>
            <person name="Purnelle B."/>
            <person name="Rasmussen S.W."/>
            <person name="Remacha M.A."/>
            <person name="Revuelta J.L."/>
            <person name="Rieger M."/>
            <person name="Salom D."/>
            <person name="Saluz H.P."/>
            <person name="Saiz J.E."/>
            <person name="Saren A.-M."/>
            <person name="Schaefer M."/>
            <person name="Scharfe M."/>
            <person name="Schmidt E.R."/>
            <person name="Schneider C."/>
            <person name="Scholler P."/>
            <person name="Schwarz S."/>
            <person name="Soler-Mira A."/>
            <person name="Urrestarazu L.A."/>
            <person name="Verhasselt P."/>
            <person name="Vissers S."/>
            <person name="Voet M."/>
            <person name="Volckaert G."/>
            <person name="Wagner G."/>
            <person name="Wambutt R."/>
            <person name="Wedler E."/>
            <person name="Wedler H."/>
            <person name="Woelfl S."/>
            <person name="Harris D.E."/>
            <person name="Bowman S."/>
            <person name="Brown D."/>
            <person name="Churcher C.M."/>
            <person name="Connor R."/>
            <person name="Dedman K."/>
            <person name="Gentles S."/>
            <person name="Hamlin N."/>
            <person name="Hunt S."/>
            <person name="Jones L."/>
            <person name="McDonald S."/>
            <person name="Murphy L.D."/>
            <person name="Niblett D."/>
            <person name="Odell C."/>
            <person name="Oliver K."/>
            <person name="Rajandream M.A."/>
            <person name="Richards C."/>
            <person name="Shore L."/>
            <person name="Walsh S.V."/>
            <person name="Barrell B.G."/>
            <person name="Dietrich F.S."/>
            <person name="Mulligan J.T."/>
            <person name="Allen E."/>
            <person name="Araujo R."/>
            <person name="Aviles E."/>
            <person name="Berno A."/>
            <person name="Carpenter J."/>
            <person name="Chen E."/>
            <person name="Cherry J.M."/>
            <person name="Chung E."/>
            <person name="Duncan M."/>
            <person name="Hunicke-Smith S."/>
            <person name="Hyman R.W."/>
            <person name="Komp C."/>
            <person name="Lashkari D."/>
            <person name="Lew H."/>
            <person name="Lin D."/>
            <person name="Mosedale D."/>
            <person name="Nakahara K."/>
            <person name="Namath A."/>
            <person name="Oefner P."/>
            <person name="Oh C."/>
            <person name="Petel F.X."/>
            <person name="Roberts D."/>
            <person name="Schramm S."/>
            <person name="Schroeder M."/>
            <person name="Shogren T."/>
            <person name="Shroff N."/>
            <person name="Winant A."/>
            <person name="Yelton M.A."/>
            <person name="Botstein D."/>
            <person name="Davis R.W."/>
            <person name="Johnston M."/>
            <person name="Andrews S."/>
            <person name="Brinkman R."/>
            <person name="Cooper J."/>
            <person name="Ding H."/>
            <person name="Du Z."/>
            <person name="Favello A."/>
            <person name="Fulton L."/>
            <person name="Gattung S."/>
            <person name="Greco T."/>
            <person name="Hallsworth K."/>
            <person name="Hawkins J."/>
            <person name="Hillier L.W."/>
            <person name="Jier M."/>
            <person name="Johnson D."/>
            <person name="Johnston L."/>
            <person name="Kirsten J."/>
            <person name="Kucaba T."/>
            <person name="Langston Y."/>
            <person name="Latreille P."/>
            <person name="Le T."/>
            <person name="Mardis E."/>
            <person name="Menezes S."/>
            <person name="Miller N."/>
            <person name="Nhan M."/>
            <person name="Pauley A."/>
            <person name="Peluso D."/>
            <person name="Rifkin L."/>
            <person name="Riles L."/>
            <person name="Taich A."/>
            <person name="Trevaskis E."/>
            <person name="Vignati D."/>
            <person name="Wilcox L."/>
            <person name="Wohldman P."/>
            <person name="Vaudin M."/>
            <person name="Wilson R."/>
            <person name="Waterston R."/>
            <person name="Albermann K."/>
            <person name="Hani J."/>
            <person name="Heumann K."/>
            <person name="Kleine K."/>
            <person name="Mewes H.-W."/>
            <person name="Zollner A."/>
            <person name="Zaccaria P."/>
        </authorList>
    </citation>
    <scope>NUCLEOTIDE SEQUENCE [LARGE SCALE GENOMIC DNA]</scope>
    <source>
        <strain>ATCC 204508 / S288c</strain>
    </source>
</reference>
<reference key="2">
    <citation type="journal article" date="2014" name="G3 (Bethesda)">
        <title>The reference genome sequence of Saccharomyces cerevisiae: Then and now.</title>
        <authorList>
            <person name="Engel S.R."/>
            <person name="Dietrich F.S."/>
            <person name="Fisk D.G."/>
            <person name="Binkley G."/>
            <person name="Balakrishnan R."/>
            <person name="Costanzo M.C."/>
            <person name="Dwight S.S."/>
            <person name="Hitz B.C."/>
            <person name="Karra K."/>
            <person name="Nash R.S."/>
            <person name="Weng S."/>
            <person name="Wong E.D."/>
            <person name="Lloyd P."/>
            <person name="Skrzypek M.S."/>
            <person name="Miyasato S.R."/>
            <person name="Simison M."/>
            <person name="Cherry J.M."/>
        </authorList>
    </citation>
    <scope>GENOME REANNOTATION</scope>
    <source>
        <strain>ATCC 204508 / S288c</strain>
    </source>
</reference>
<reference key="3">
    <citation type="journal article" date="2007" name="Genome Res.">
        <title>Approaching a complete repository of sequence-verified protein-encoding clones for Saccharomyces cerevisiae.</title>
        <authorList>
            <person name="Hu Y."/>
            <person name="Rolfs A."/>
            <person name="Bhullar B."/>
            <person name="Murthy T.V.S."/>
            <person name="Zhu C."/>
            <person name="Berger M.F."/>
            <person name="Camargo A.A."/>
            <person name="Kelley F."/>
            <person name="McCarron S."/>
            <person name="Jepson D."/>
            <person name="Richardson A."/>
            <person name="Raphael J."/>
            <person name="Moreira D."/>
            <person name="Taycher E."/>
            <person name="Zuo D."/>
            <person name="Mohr S."/>
            <person name="Kane M.F."/>
            <person name="Williamson J."/>
            <person name="Simpson A.J.G."/>
            <person name="Bulyk M.L."/>
            <person name="Harlow E."/>
            <person name="Marsischky G."/>
            <person name="Kolodner R.D."/>
            <person name="LaBaer J."/>
        </authorList>
    </citation>
    <scope>NUCLEOTIDE SEQUENCE [GENOMIC DNA]</scope>
    <source>
        <strain>ATCC 204508 / S288c</strain>
    </source>
</reference>
<accession>Q03205</accession>
<accession>D6VS30</accession>
<protein>
    <recommendedName>
        <fullName>Uncharacterized protein YDR042C</fullName>
    </recommendedName>
</protein>
<organism>
    <name type="scientific">Saccharomyces cerevisiae (strain ATCC 204508 / S288c)</name>
    <name type="common">Baker's yeast</name>
    <dbReference type="NCBI Taxonomy" id="559292"/>
    <lineage>
        <taxon>Eukaryota</taxon>
        <taxon>Fungi</taxon>
        <taxon>Dikarya</taxon>
        <taxon>Ascomycota</taxon>
        <taxon>Saccharomycotina</taxon>
        <taxon>Saccharomycetes</taxon>
        <taxon>Saccharomycetales</taxon>
        <taxon>Saccharomycetaceae</taxon>
        <taxon>Saccharomyces</taxon>
    </lineage>
</organism>
<sequence>MEQILYNQSLKISTLSTFQGLKFLKVLIFSIFQQLFYNPVIQLFGTKASIMESDSTTLLESSWSTERNFLNMNSDSISATKNVFILFFTIFRLAEYIVYKLSDQKYRLHTSLNVQHFRWNSKKNTNRKRTLSFSKAYLPRTNILPIFVADGLKNRFSGPLPGKSLESFQKLNLLSDNNIKRYAVPGNKAVNTLLWQEQYS</sequence>
<name>YD042_YEAST</name>
<feature type="chain" id="PRO_0000242648" description="Uncharacterized protein YDR042C">
    <location>
        <begin position="1"/>
        <end position="200"/>
    </location>
</feature>
<dbReference type="EMBL" id="Z54075">
    <property type="protein sequence ID" value="CAA90781.1"/>
    <property type="molecule type" value="Genomic_DNA"/>
</dbReference>
<dbReference type="EMBL" id="AY557647">
    <property type="protein sequence ID" value="AAS55973.1"/>
    <property type="molecule type" value="Genomic_DNA"/>
</dbReference>
<dbReference type="EMBL" id="BK006938">
    <property type="protein sequence ID" value="DAA11890.1"/>
    <property type="molecule type" value="Genomic_DNA"/>
</dbReference>
<dbReference type="PIR" id="S59280">
    <property type="entry name" value="S59280"/>
</dbReference>
<dbReference type="RefSeq" id="NP_010327.3">
    <property type="nucleotide sequence ID" value="NM_001180350.3"/>
</dbReference>
<dbReference type="BioGRID" id="32097">
    <property type="interactions" value="69"/>
</dbReference>
<dbReference type="DIP" id="DIP-5197N"/>
<dbReference type="FunCoup" id="Q03205">
    <property type="interactions" value="74"/>
</dbReference>
<dbReference type="IntAct" id="Q03205">
    <property type="interactions" value="2"/>
</dbReference>
<dbReference type="STRING" id="4932.YDR042C"/>
<dbReference type="iPTMnet" id="Q03205"/>
<dbReference type="PaxDb" id="4932-YDR042C"/>
<dbReference type="EnsemblFungi" id="YDR042C_mRNA">
    <property type="protein sequence ID" value="YDR042C"/>
    <property type="gene ID" value="YDR042C"/>
</dbReference>
<dbReference type="GeneID" id="851612"/>
<dbReference type="KEGG" id="sce:YDR042C"/>
<dbReference type="AGR" id="SGD:S000002449"/>
<dbReference type="SGD" id="S000002449">
    <property type="gene designation" value="YDR042C"/>
</dbReference>
<dbReference type="VEuPathDB" id="FungiDB:YDR042C"/>
<dbReference type="HOGENOM" id="CLU_118218_0_0_1"/>
<dbReference type="InParanoid" id="Q03205"/>
<dbReference type="OMA" id="KISTLSX"/>
<dbReference type="OrthoDB" id="4052352at2759"/>
<dbReference type="BioCyc" id="YEAST:G3O-29656-MONOMER"/>
<dbReference type="BioGRID-ORCS" id="851612">
    <property type="hits" value="0 hits in 10 CRISPR screens"/>
</dbReference>
<dbReference type="PRO" id="PR:Q03205"/>
<dbReference type="Proteomes" id="UP000002311">
    <property type="component" value="Chromosome IV"/>
</dbReference>
<dbReference type="RNAct" id="Q03205">
    <property type="molecule type" value="protein"/>
</dbReference>
<proteinExistence type="predicted"/>
<keyword id="KW-1185">Reference proteome</keyword>